<keyword id="KW-0963">Cytoplasm</keyword>
<keyword id="KW-0255">Endonuclease</keyword>
<keyword id="KW-0378">Hydrolase</keyword>
<keyword id="KW-0479">Metal-binding</keyword>
<keyword id="KW-0540">Nuclease</keyword>
<keyword id="KW-0690">Ribosome biogenesis</keyword>
<keyword id="KW-0698">rRNA processing</keyword>
<keyword id="KW-0862">Zinc</keyword>
<reference key="1">
    <citation type="journal article" date="2009" name="PLoS Genet.">
        <title>Organised genome dynamics in the Escherichia coli species results in highly diverse adaptive paths.</title>
        <authorList>
            <person name="Touchon M."/>
            <person name="Hoede C."/>
            <person name="Tenaillon O."/>
            <person name="Barbe V."/>
            <person name="Baeriswyl S."/>
            <person name="Bidet P."/>
            <person name="Bingen E."/>
            <person name="Bonacorsi S."/>
            <person name="Bouchier C."/>
            <person name="Bouvet O."/>
            <person name="Calteau A."/>
            <person name="Chiapello H."/>
            <person name="Clermont O."/>
            <person name="Cruveiller S."/>
            <person name="Danchin A."/>
            <person name="Diard M."/>
            <person name="Dossat C."/>
            <person name="Karoui M.E."/>
            <person name="Frapy E."/>
            <person name="Garry L."/>
            <person name="Ghigo J.M."/>
            <person name="Gilles A.M."/>
            <person name="Johnson J."/>
            <person name="Le Bouguenec C."/>
            <person name="Lescat M."/>
            <person name="Mangenot S."/>
            <person name="Martinez-Jehanne V."/>
            <person name="Matic I."/>
            <person name="Nassif X."/>
            <person name="Oztas S."/>
            <person name="Petit M.A."/>
            <person name="Pichon C."/>
            <person name="Rouy Z."/>
            <person name="Ruf C.S."/>
            <person name="Schneider D."/>
            <person name="Tourret J."/>
            <person name="Vacherie B."/>
            <person name="Vallenet D."/>
            <person name="Medigue C."/>
            <person name="Rocha E.P.C."/>
            <person name="Denamur E."/>
        </authorList>
    </citation>
    <scope>NUCLEOTIDE SEQUENCE [LARGE SCALE GENOMIC DNA]</scope>
    <source>
        <strain>UMN026 / ExPEC</strain>
    </source>
</reference>
<accession>B7N9R4</accession>
<protein>
    <recommendedName>
        <fullName evidence="1">Endoribonuclease YbeY</fullName>
        <ecNumber evidence="1">3.1.-.-</ecNumber>
    </recommendedName>
</protein>
<name>YBEY_ECOLU</name>
<sequence>MSQVILDLQLACEDNSGLPEESQFQTWLNAVIPQFQEESEVTIRVVDTAESHSLNLIYRGKDKPTNVLSFPFEVPPGMEMSLLGDLVICRQVVEKEAQEQGKPLEAHWAHMVVHGSLHLLGYDHIEDDEAEEMEALETEIMLALGYEDPYIAEKE</sequence>
<proteinExistence type="inferred from homology"/>
<organism>
    <name type="scientific">Escherichia coli O17:K52:H18 (strain UMN026 / ExPEC)</name>
    <dbReference type="NCBI Taxonomy" id="585056"/>
    <lineage>
        <taxon>Bacteria</taxon>
        <taxon>Pseudomonadati</taxon>
        <taxon>Pseudomonadota</taxon>
        <taxon>Gammaproteobacteria</taxon>
        <taxon>Enterobacterales</taxon>
        <taxon>Enterobacteriaceae</taxon>
        <taxon>Escherichia</taxon>
    </lineage>
</organism>
<gene>
    <name evidence="1" type="primary">ybeY</name>
    <name type="ordered locus">ECUMN_0752</name>
</gene>
<evidence type="ECO:0000255" key="1">
    <source>
        <dbReference type="HAMAP-Rule" id="MF_00009"/>
    </source>
</evidence>
<feature type="chain" id="PRO_1000199973" description="Endoribonuclease YbeY">
    <location>
        <begin position="1"/>
        <end position="155"/>
    </location>
</feature>
<feature type="binding site" evidence="1">
    <location>
        <position position="114"/>
    </location>
    <ligand>
        <name>Zn(2+)</name>
        <dbReference type="ChEBI" id="CHEBI:29105"/>
        <note>catalytic</note>
    </ligand>
</feature>
<feature type="binding site" evidence="1">
    <location>
        <position position="118"/>
    </location>
    <ligand>
        <name>Zn(2+)</name>
        <dbReference type="ChEBI" id="CHEBI:29105"/>
        <note>catalytic</note>
    </ligand>
</feature>
<feature type="binding site" evidence="1">
    <location>
        <position position="124"/>
    </location>
    <ligand>
        <name>Zn(2+)</name>
        <dbReference type="ChEBI" id="CHEBI:29105"/>
        <note>catalytic</note>
    </ligand>
</feature>
<dbReference type="EC" id="3.1.-.-" evidence="1"/>
<dbReference type="EMBL" id="CU928163">
    <property type="protein sequence ID" value="CAR11965.1"/>
    <property type="molecule type" value="Genomic_DNA"/>
</dbReference>
<dbReference type="RefSeq" id="WP_000084463.1">
    <property type="nucleotide sequence ID" value="NC_011751.1"/>
</dbReference>
<dbReference type="RefSeq" id="YP_002411511.1">
    <property type="nucleotide sequence ID" value="NC_011751.1"/>
</dbReference>
<dbReference type="SMR" id="B7N9R4"/>
<dbReference type="STRING" id="585056.ECUMN_0752"/>
<dbReference type="KEGG" id="eum:ECUMN_0752"/>
<dbReference type="PATRIC" id="fig|585056.7.peg.952"/>
<dbReference type="HOGENOM" id="CLU_106710_0_1_6"/>
<dbReference type="Proteomes" id="UP000007097">
    <property type="component" value="Chromosome"/>
</dbReference>
<dbReference type="GO" id="GO:0005737">
    <property type="term" value="C:cytoplasm"/>
    <property type="evidence" value="ECO:0007669"/>
    <property type="project" value="UniProtKB-SubCell"/>
</dbReference>
<dbReference type="GO" id="GO:0004222">
    <property type="term" value="F:metalloendopeptidase activity"/>
    <property type="evidence" value="ECO:0007669"/>
    <property type="project" value="InterPro"/>
</dbReference>
<dbReference type="GO" id="GO:0004521">
    <property type="term" value="F:RNA endonuclease activity"/>
    <property type="evidence" value="ECO:0007669"/>
    <property type="project" value="UniProtKB-UniRule"/>
</dbReference>
<dbReference type="GO" id="GO:0008270">
    <property type="term" value="F:zinc ion binding"/>
    <property type="evidence" value="ECO:0007669"/>
    <property type="project" value="UniProtKB-UniRule"/>
</dbReference>
<dbReference type="GO" id="GO:0006364">
    <property type="term" value="P:rRNA processing"/>
    <property type="evidence" value="ECO:0007669"/>
    <property type="project" value="UniProtKB-UniRule"/>
</dbReference>
<dbReference type="FunFam" id="3.40.390.30:FF:000001">
    <property type="entry name" value="Endoribonuclease YbeY"/>
    <property type="match status" value="1"/>
</dbReference>
<dbReference type="Gene3D" id="3.40.390.30">
    <property type="entry name" value="Metalloproteases ('zincins'), catalytic domain"/>
    <property type="match status" value="1"/>
</dbReference>
<dbReference type="HAMAP" id="MF_00009">
    <property type="entry name" value="Endoribonucl_YbeY"/>
    <property type="match status" value="1"/>
</dbReference>
<dbReference type="InterPro" id="IPR023091">
    <property type="entry name" value="MetalPrtase_cat_dom_sf_prd"/>
</dbReference>
<dbReference type="InterPro" id="IPR002036">
    <property type="entry name" value="YbeY"/>
</dbReference>
<dbReference type="InterPro" id="IPR020549">
    <property type="entry name" value="YbeY_CS"/>
</dbReference>
<dbReference type="NCBIfam" id="TIGR00043">
    <property type="entry name" value="rRNA maturation RNase YbeY"/>
    <property type="match status" value="1"/>
</dbReference>
<dbReference type="PANTHER" id="PTHR46986">
    <property type="entry name" value="ENDORIBONUCLEASE YBEY, CHLOROPLASTIC"/>
    <property type="match status" value="1"/>
</dbReference>
<dbReference type="PANTHER" id="PTHR46986:SF1">
    <property type="entry name" value="ENDORIBONUCLEASE YBEY, CHLOROPLASTIC"/>
    <property type="match status" value="1"/>
</dbReference>
<dbReference type="Pfam" id="PF02130">
    <property type="entry name" value="YbeY"/>
    <property type="match status" value="1"/>
</dbReference>
<dbReference type="SUPFAM" id="SSF55486">
    <property type="entry name" value="Metalloproteases ('zincins'), catalytic domain"/>
    <property type="match status" value="1"/>
</dbReference>
<dbReference type="PROSITE" id="PS01306">
    <property type="entry name" value="UPF0054"/>
    <property type="match status" value="1"/>
</dbReference>
<comment type="function">
    <text evidence="1">Single strand-specific metallo-endoribonuclease involved in late-stage 70S ribosome quality control and in maturation of the 3' terminus of the 16S rRNA.</text>
</comment>
<comment type="cofactor">
    <cofactor evidence="1">
        <name>Zn(2+)</name>
        <dbReference type="ChEBI" id="CHEBI:29105"/>
    </cofactor>
    <text evidence="1">Binds 1 zinc ion.</text>
</comment>
<comment type="subcellular location">
    <subcellularLocation>
        <location evidence="1">Cytoplasm</location>
    </subcellularLocation>
</comment>
<comment type="similarity">
    <text evidence="1">Belongs to the endoribonuclease YbeY family.</text>
</comment>